<name>SRB8_EREGS</name>
<reference key="1">
    <citation type="journal article" date="2004" name="Science">
        <title>The Ashbya gossypii genome as a tool for mapping the ancient Saccharomyces cerevisiae genome.</title>
        <authorList>
            <person name="Dietrich F.S."/>
            <person name="Voegeli S."/>
            <person name="Brachat S."/>
            <person name="Lerch A."/>
            <person name="Gates K."/>
            <person name="Steiner S."/>
            <person name="Mohr C."/>
            <person name="Poehlmann R."/>
            <person name="Luedi P."/>
            <person name="Choi S."/>
            <person name="Wing R.A."/>
            <person name="Flavier A."/>
            <person name="Gaffney T.D."/>
            <person name="Philippsen P."/>
        </authorList>
    </citation>
    <scope>NUCLEOTIDE SEQUENCE [LARGE SCALE GENOMIC DNA]</scope>
    <source>
        <strain>ATCC 10895 / CBS 109.51 / FGSC 9923 / NRRL Y-1056</strain>
    </source>
</reference>
<reference key="2">
    <citation type="journal article" date="2013" name="G3 (Bethesda)">
        <title>Genomes of Ashbya fungi isolated from insects reveal four mating-type loci, numerous translocations, lack of transposons, and distinct gene duplications.</title>
        <authorList>
            <person name="Dietrich F.S."/>
            <person name="Voegeli S."/>
            <person name="Kuo S."/>
            <person name="Philippsen P."/>
        </authorList>
    </citation>
    <scope>GENOME REANNOTATION</scope>
    <scope>SEQUENCE REVISION TO 94 AND 100</scope>
    <source>
        <strain>ATCC 10895 / CBS 109.51 / FGSC 9923 / NRRL Y-1056</strain>
    </source>
</reference>
<gene>
    <name type="primary">SRB8</name>
    <name type="synonym">MED12</name>
    <name type="ordered locus">AGL226C</name>
</gene>
<keyword id="KW-0010">Activator</keyword>
<keyword id="KW-0175">Coiled coil</keyword>
<keyword id="KW-0539">Nucleus</keyword>
<keyword id="KW-1185">Reference proteome</keyword>
<keyword id="KW-0678">Repressor</keyword>
<keyword id="KW-0804">Transcription</keyword>
<keyword id="KW-0805">Transcription regulation</keyword>
<feature type="chain" id="PRO_0000312964" description="Mediator of RNA polymerase II transcription subunit 12">
    <location>
        <begin position="1"/>
        <end position="1358"/>
    </location>
</feature>
<feature type="coiled-coil region" evidence="2">
    <location>
        <begin position="629"/>
        <end position="654"/>
    </location>
</feature>
<comment type="function">
    <text evidence="1">Component of the SRB8-11 complex. The SRB8-11 complex is a regulatory module of the Mediator complex which is itself involved in regulation of basal and activated RNA polymerase II-dependent transcription. The SRB8-11 complex may be involved in the transcriptional repression of a subset of genes regulated by Mediator. It may inhibit the association of the Mediator complex with RNA polymerase II to form the holoenzyme complex (By similarity).</text>
</comment>
<comment type="subunit">
    <text evidence="1">Component of the SRB8-11 complex, which itself associates with the Mediator complex.</text>
</comment>
<comment type="subcellular location">
    <subcellularLocation>
        <location evidence="3">Nucleus</location>
    </subcellularLocation>
</comment>
<comment type="similarity">
    <text evidence="3">Belongs to the Mediator complex subunit 12 family.</text>
</comment>
<sequence>MSSSRYILIPPEDLHPLTSNTGNEQNIYPDFDPWAHTEIEDKILLSFVAKGHYTSAKVNFESISARSSLQESLPKVAGMLAEQFSKVVHLREQTINKVSGESEESIRGKAKFTDLAGPGFSLPNRVTLTDQRRTQWLQELSSPNVSLSKLAKSIPHGFKRKQILEQCYMRQLPLQRAIWLIKSSYSIEWKSLTSKLKPGQTNEGVVSQLYNLWTNSMVSIMERLLFEMPKYYNDTAQAKIWKPRVSYYINLLGNCYNMGLMDRGVFNHWLVEFVEKVENFEFLPLSLHLLNIFWSGICPPTHGIEAPDNSFLISKITVVLLHKHHMILQNKSMINDENYIINDLQRNARLKESLLLRLKAFILDIFHHQSLEAFIMPNQNWDLYKNCLYEIVTMDKTSNEQAMVIKRKLELITYRNDSLQFNLLKQYKMKSSSLYESDGVEIDNLCDMQSILNVPFLDPEMTKILDNATPGYDWTLFVQQRFTCIEKVAQMIMWATNPSRKARYDGAHLVAKLLLLKTTSQENLPDYNMEDMIWKLVFHFSKLSERELSNIVELPSLYELLNIFIGYGIIKVPTYIRKLISSGIMYISDSKDKFFHCELLINLKISPLMKNQYNMMLKNIMEYDATYYVRYNYEQLQIQLNTAKEQMLQEQFEHISCLPISVKIWVSEWYLSYVCSPVDNVLKPVDKGTVIKNFTIFGLYLKEIFHFYKWVEFIVYHQLLADINALSALIDVLLYYENLFPLLINDQILFMKTLIHIYSKGLKNKDNLSYNITEFNPFWKFFMKHFPYLVEIDSDLQLQLGEVYESEKIRIEKLTKSSVDVITLYCNINQVNEESFKFGTHNFPGIFQQNLKILLKTESADACERARKGLSLLMLANLGDYTKFMSIFLKRKDYTIEQLVKLISVKLLTLDQIQKIIGDDILREILSRNNYGEGLWYELHKRNFIKKNFKIVLSMYRNSTSLDDRKLFLDLLVFYGPNSRLQEQVTTIICNCLRESNEDYSLILSLLRYGTKNIDQGTQETINIAKLYENLNFTNLWIFQAFTNYYTEALFNGATSDGQTITNFVFELIDLTRYNVLCSHLFDRVANFDVLEKLLEVFEADFFKKCLSEDPDDVHFLAVMIETIMNLSRKMNQSSAVISMNNESFRLLQATMLKFTSMNKTALCNSEMKLSIYLKIFIVHQKFIFQKVCDSLRQDRYDAEADLVKSLRLLFENTGFKLKLRLLLYDILSSLKSFVIYECTKKSESKRETRKLQISEALQNLPPFHISSFLDDMSISAHGDFDFLGLTEQPTPAEPEEGSQFFLYNKRTREYECGLNIEPFQLLPNHQSREPGSSCHFFNDTALSLSLFDARFDKKNPT</sequence>
<accession>Q751D2</accession>
<organism>
    <name type="scientific">Eremothecium gossypii (strain ATCC 10895 / CBS 109.51 / FGSC 9923 / NRRL Y-1056)</name>
    <name type="common">Yeast</name>
    <name type="synonym">Ashbya gossypii</name>
    <dbReference type="NCBI Taxonomy" id="284811"/>
    <lineage>
        <taxon>Eukaryota</taxon>
        <taxon>Fungi</taxon>
        <taxon>Dikarya</taxon>
        <taxon>Ascomycota</taxon>
        <taxon>Saccharomycotina</taxon>
        <taxon>Saccharomycetes</taxon>
        <taxon>Saccharomycetales</taxon>
        <taxon>Saccharomycetaceae</taxon>
        <taxon>Eremothecium</taxon>
    </lineage>
</organism>
<protein>
    <recommendedName>
        <fullName>Mediator of RNA polymerase II transcription subunit 12</fullName>
    </recommendedName>
    <alternativeName>
        <fullName>Mediator complex subunit 12</fullName>
    </alternativeName>
</protein>
<dbReference type="EMBL" id="AE016820">
    <property type="protein sequence ID" value="AAS54265.2"/>
    <property type="molecule type" value="Genomic_DNA"/>
</dbReference>
<dbReference type="RefSeq" id="NP_986441.2">
    <property type="nucleotide sequence ID" value="NM_211503.2"/>
</dbReference>
<dbReference type="SMR" id="Q751D2"/>
<dbReference type="FunCoup" id="Q751D2">
    <property type="interactions" value="165"/>
</dbReference>
<dbReference type="STRING" id="284811.Q751D2"/>
<dbReference type="EnsemblFungi" id="AAS54265">
    <property type="protein sequence ID" value="AAS54265"/>
    <property type="gene ID" value="AGOS_AGL226C"/>
</dbReference>
<dbReference type="GeneID" id="4622734"/>
<dbReference type="KEGG" id="ago:AGOS_AGL226C"/>
<dbReference type="eggNOG" id="KOG4522">
    <property type="taxonomic scope" value="Eukaryota"/>
</dbReference>
<dbReference type="HOGENOM" id="CLU_256280_0_0_1"/>
<dbReference type="InParanoid" id="Q751D2"/>
<dbReference type="OMA" id="EFIVYHQ"/>
<dbReference type="OrthoDB" id="20828at2759"/>
<dbReference type="Proteomes" id="UP000000591">
    <property type="component" value="Chromosome VII"/>
</dbReference>
<dbReference type="GO" id="GO:1990508">
    <property type="term" value="C:CKM complex"/>
    <property type="evidence" value="ECO:0007669"/>
    <property type="project" value="EnsemblFungi"/>
</dbReference>
<dbReference type="GO" id="GO:0016592">
    <property type="term" value="C:mediator complex"/>
    <property type="evidence" value="ECO:0007669"/>
    <property type="project" value="EnsemblFungi"/>
</dbReference>
<dbReference type="GO" id="GO:0003713">
    <property type="term" value="F:transcription coactivator activity"/>
    <property type="evidence" value="ECO:0007669"/>
    <property type="project" value="EnsemblFungi"/>
</dbReference>
<dbReference type="GO" id="GO:0000122">
    <property type="term" value="P:negative regulation of transcription by RNA polymerase II"/>
    <property type="evidence" value="ECO:0007669"/>
    <property type="project" value="EnsemblFungi"/>
</dbReference>
<dbReference type="GO" id="GO:0000411">
    <property type="term" value="P:positive regulation of transcription by galactose"/>
    <property type="evidence" value="ECO:0007669"/>
    <property type="project" value="EnsemblFungi"/>
</dbReference>
<dbReference type="GO" id="GO:0045944">
    <property type="term" value="P:positive regulation of transcription by RNA polymerase II"/>
    <property type="evidence" value="ECO:0007669"/>
    <property type="project" value="EnsemblFungi"/>
</dbReference>
<dbReference type="InterPro" id="IPR019035">
    <property type="entry name" value="Mediator_Med12"/>
</dbReference>
<dbReference type="PANTHER" id="PTHR46567">
    <property type="entry name" value="MEDIATOR OF RNA POLYMERASE II TRANSCRIPTION SUBUNIT 12"/>
    <property type="match status" value="1"/>
</dbReference>
<dbReference type="PANTHER" id="PTHR46567:SF1">
    <property type="entry name" value="MEDIATOR OF RNA POLYMERASE II TRANSCRIPTION SUBUNIT 12"/>
    <property type="match status" value="1"/>
</dbReference>
<dbReference type="Pfam" id="PF09497">
    <property type="entry name" value="Med12"/>
    <property type="match status" value="1"/>
</dbReference>
<dbReference type="SMART" id="SM01281">
    <property type="entry name" value="Med12"/>
    <property type="match status" value="1"/>
</dbReference>
<proteinExistence type="inferred from homology"/>
<evidence type="ECO:0000250" key="1"/>
<evidence type="ECO:0000255" key="2"/>
<evidence type="ECO:0000305" key="3"/>